<dbReference type="EC" id="4.3.2.1" evidence="1"/>
<dbReference type="EMBL" id="CP000263">
    <property type="protein sequence ID" value="ABJ90514.1"/>
    <property type="molecule type" value="Genomic_DNA"/>
</dbReference>
<dbReference type="RefSeq" id="WP_011672433.1">
    <property type="nucleotide sequence ID" value="NC_008513.1"/>
</dbReference>
<dbReference type="SMR" id="Q058D5"/>
<dbReference type="STRING" id="372461.BCc_033"/>
<dbReference type="KEGG" id="bcc:BCc_033"/>
<dbReference type="eggNOG" id="COG0165">
    <property type="taxonomic scope" value="Bacteria"/>
</dbReference>
<dbReference type="HOGENOM" id="CLU_027272_2_3_6"/>
<dbReference type="OrthoDB" id="9769623at2"/>
<dbReference type="UniPathway" id="UPA00068">
    <property type="reaction ID" value="UER00114"/>
</dbReference>
<dbReference type="Proteomes" id="UP000000669">
    <property type="component" value="Chromosome"/>
</dbReference>
<dbReference type="GO" id="GO:0005829">
    <property type="term" value="C:cytosol"/>
    <property type="evidence" value="ECO:0007669"/>
    <property type="project" value="TreeGrafter"/>
</dbReference>
<dbReference type="GO" id="GO:0004056">
    <property type="term" value="F:argininosuccinate lyase activity"/>
    <property type="evidence" value="ECO:0007669"/>
    <property type="project" value="UniProtKB-UniRule"/>
</dbReference>
<dbReference type="GO" id="GO:0042450">
    <property type="term" value="P:arginine biosynthetic process via ornithine"/>
    <property type="evidence" value="ECO:0007669"/>
    <property type="project" value="InterPro"/>
</dbReference>
<dbReference type="GO" id="GO:0006526">
    <property type="term" value="P:L-arginine biosynthetic process"/>
    <property type="evidence" value="ECO:0007669"/>
    <property type="project" value="UniProtKB-UniRule"/>
</dbReference>
<dbReference type="CDD" id="cd01359">
    <property type="entry name" value="Argininosuccinate_lyase"/>
    <property type="match status" value="1"/>
</dbReference>
<dbReference type="FunFam" id="1.10.40.30:FF:000001">
    <property type="entry name" value="Argininosuccinate lyase"/>
    <property type="match status" value="1"/>
</dbReference>
<dbReference type="FunFam" id="1.20.200.10:FF:000006">
    <property type="entry name" value="Argininosuccinate lyase"/>
    <property type="match status" value="1"/>
</dbReference>
<dbReference type="Gene3D" id="1.10.40.30">
    <property type="entry name" value="Fumarase/aspartase (C-terminal domain)"/>
    <property type="match status" value="1"/>
</dbReference>
<dbReference type="Gene3D" id="1.20.200.10">
    <property type="entry name" value="Fumarase/aspartase (Central domain)"/>
    <property type="match status" value="1"/>
</dbReference>
<dbReference type="Gene3D" id="1.10.275.10">
    <property type="entry name" value="Fumarase/aspartase (N-terminal domain)"/>
    <property type="match status" value="1"/>
</dbReference>
<dbReference type="HAMAP" id="MF_00006">
    <property type="entry name" value="Arg_succ_lyase"/>
    <property type="match status" value="1"/>
</dbReference>
<dbReference type="InterPro" id="IPR029419">
    <property type="entry name" value="Arg_succ_lyase_C"/>
</dbReference>
<dbReference type="InterPro" id="IPR009049">
    <property type="entry name" value="Argininosuccinate_lyase"/>
</dbReference>
<dbReference type="InterPro" id="IPR024083">
    <property type="entry name" value="Fumarase/histidase_N"/>
</dbReference>
<dbReference type="InterPro" id="IPR020557">
    <property type="entry name" value="Fumarate_lyase_CS"/>
</dbReference>
<dbReference type="InterPro" id="IPR000362">
    <property type="entry name" value="Fumarate_lyase_fam"/>
</dbReference>
<dbReference type="InterPro" id="IPR022761">
    <property type="entry name" value="Fumarate_lyase_N"/>
</dbReference>
<dbReference type="InterPro" id="IPR008948">
    <property type="entry name" value="L-Aspartase-like"/>
</dbReference>
<dbReference type="NCBIfam" id="TIGR00838">
    <property type="entry name" value="argH"/>
    <property type="match status" value="1"/>
</dbReference>
<dbReference type="NCBIfam" id="NF008964">
    <property type="entry name" value="PRK12308.1"/>
    <property type="match status" value="1"/>
</dbReference>
<dbReference type="PANTHER" id="PTHR43814">
    <property type="entry name" value="ARGININOSUCCINATE LYASE"/>
    <property type="match status" value="1"/>
</dbReference>
<dbReference type="PANTHER" id="PTHR43814:SF1">
    <property type="entry name" value="ARGININOSUCCINATE LYASE"/>
    <property type="match status" value="1"/>
</dbReference>
<dbReference type="Pfam" id="PF14698">
    <property type="entry name" value="ASL_C2"/>
    <property type="match status" value="1"/>
</dbReference>
<dbReference type="Pfam" id="PF00206">
    <property type="entry name" value="Lyase_1"/>
    <property type="match status" value="1"/>
</dbReference>
<dbReference type="PRINTS" id="PR00145">
    <property type="entry name" value="ARGSUCLYASE"/>
</dbReference>
<dbReference type="PRINTS" id="PR00149">
    <property type="entry name" value="FUMRATELYASE"/>
</dbReference>
<dbReference type="SUPFAM" id="SSF48557">
    <property type="entry name" value="L-aspartase-like"/>
    <property type="match status" value="1"/>
</dbReference>
<dbReference type="PROSITE" id="PS00163">
    <property type="entry name" value="FUMARATE_LYASES"/>
    <property type="match status" value="1"/>
</dbReference>
<evidence type="ECO:0000255" key="1">
    <source>
        <dbReference type="HAMAP-Rule" id="MF_00006"/>
    </source>
</evidence>
<accession>Q058D5</accession>
<name>ARLY_BUCCC</name>
<gene>
    <name evidence="1" type="primary">argH</name>
    <name type="ordered locus">BCc_033</name>
</gene>
<proteinExistence type="inferred from homology"/>
<organism>
    <name type="scientific">Buchnera aphidicola subsp. Cinara cedri (strain Cc)</name>
    <dbReference type="NCBI Taxonomy" id="372461"/>
    <lineage>
        <taxon>Bacteria</taxon>
        <taxon>Pseudomonadati</taxon>
        <taxon>Pseudomonadota</taxon>
        <taxon>Gammaproteobacteria</taxon>
        <taxon>Enterobacterales</taxon>
        <taxon>Erwiniaceae</taxon>
        <taxon>Buchnera</taxon>
    </lineage>
</organism>
<sequence length="460" mass="52510">MSLWGGRFTKISNTEFDSFNNSLRIDHRLIKDDIKSSIAWSKILLDVQVLTKKEQKIIENTLLSILKKNKNNFTKILSSNSEDIHSWLETTVINTIGDLGKKLYTGRSRNDQIATDLKLWCKRKSKKICRRIIQLQNDFLDNAYLHINTIIPGYTHLQRAQPITFSYWCLAYIEMLERDRLRILNLTQFLNSSPLGSGAISGTSWEIDRKKLAFFMGFSEITKNALDSVSDRDFILDILSAAAISMMHLSRFSEDLIFYNSGEANFIELSDSITSGSSLMPQKKNPDILELIRAKCSSVYGSLFSMFSLLKGLPLSYNKDFQEDKNHLFSGLDIWEDCLKISSLVLKNIKLKKSNCKKSAQLGYSNATELAEYLVKKGISFRDSHHITGKIVIASIKKNKCLEELDLLFLKKYCSKIESDVYQHLSLESCLNKKNSIGGVSNKQIKISLDQVKKRLSTFK</sequence>
<feature type="chain" id="PRO_1000000455" description="Argininosuccinate lyase">
    <location>
        <begin position="1"/>
        <end position="460"/>
    </location>
</feature>
<comment type="catalytic activity">
    <reaction evidence="1">
        <text>2-(N(omega)-L-arginino)succinate = fumarate + L-arginine</text>
        <dbReference type="Rhea" id="RHEA:24020"/>
        <dbReference type="ChEBI" id="CHEBI:29806"/>
        <dbReference type="ChEBI" id="CHEBI:32682"/>
        <dbReference type="ChEBI" id="CHEBI:57472"/>
        <dbReference type="EC" id="4.3.2.1"/>
    </reaction>
</comment>
<comment type="pathway">
    <text evidence="1">Amino-acid biosynthesis; L-arginine biosynthesis; L-arginine from L-ornithine and carbamoyl phosphate: step 3/3.</text>
</comment>
<comment type="subcellular location">
    <subcellularLocation>
        <location evidence="1">Cytoplasm</location>
    </subcellularLocation>
</comment>
<comment type="similarity">
    <text evidence="1">Belongs to the lyase 1 family. Argininosuccinate lyase subfamily.</text>
</comment>
<protein>
    <recommendedName>
        <fullName evidence="1">Argininosuccinate lyase</fullName>
        <shortName evidence="1">ASAL</shortName>
        <ecNumber evidence="1">4.3.2.1</ecNumber>
    </recommendedName>
    <alternativeName>
        <fullName evidence="1">Arginosuccinase</fullName>
    </alternativeName>
</protein>
<reference key="1">
    <citation type="journal article" date="2006" name="Science">
        <title>A small microbial genome: the end of a long symbiotic relationship?</title>
        <authorList>
            <person name="Perez-Brocal V."/>
            <person name="Gil R."/>
            <person name="Ramos S."/>
            <person name="Lamelas A."/>
            <person name="Postigo M."/>
            <person name="Michelena J.M."/>
            <person name="Silva F.J."/>
            <person name="Moya A."/>
            <person name="Latorre A."/>
        </authorList>
    </citation>
    <scope>NUCLEOTIDE SEQUENCE [LARGE SCALE GENOMIC DNA]</scope>
    <source>
        <strain>Cc</strain>
    </source>
</reference>
<keyword id="KW-0028">Amino-acid biosynthesis</keyword>
<keyword id="KW-0055">Arginine biosynthesis</keyword>
<keyword id="KW-0963">Cytoplasm</keyword>
<keyword id="KW-0456">Lyase</keyword>
<keyword id="KW-1185">Reference proteome</keyword>